<organism>
    <name type="scientific">Dictyostelium discoideum</name>
    <name type="common">Social amoeba</name>
    <dbReference type="NCBI Taxonomy" id="44689"/>
    <lineage>
        <taxon>Eukaryota</taxon>
        <taxon>Amoebozoa</taxon>
        <taxon>Evosea</taxon>
        <taxon>Eumycetozoa</taxon>
        <taxon>Dictyostelia</taxon>
        <taxon>Dictyosteliales</taxon>
        <taxon>Dictyosteliaceae</taxon>
        <taxon>Dictyostelium</taxon>
    </lineage>
</organism>
<keyword id="KW-0539">Nucleus</keyword>
<keyword id="KW-1185">Reference proteome</keyword>
<keyword id="KW-0677">Repeat</keyword>
<keyword id="KW-0819">tRNA processing</keyword>
<keyword id="KW-0853">WD repeat</keyword>
<sequence length="467" mass="52703">MSTTAVFIPPQIMVTSNVEKVPISIITHSSDSNFIAYRLNNKLNIFDNKLNKLGELESGSQHTGIIRSIEFTKNNQSLITSSSDKFLKIWDTTNNFKNIKSINTNKKIICSILNKDDSEILVSDKCGDVFKYSLIDDSKNKIEVSGDKSAKHDEKESDKNLVFGHYSSIVDIKFSPCFNYLLSADRDEKIRVSHYPNCFDIESFCLGHTKYVTEILLVPGRDDLLISGSGDGTIKLWNWKQGKCLQTVDFNSKHENAITIPQVVFKVDATTTTNQLIFSIENSNNIYILPMNVEKGEFNQSELKTIPLTQSSPISIDLIDNGKTILASLLPTTKEVDVAIAFDSTTLSQQSDNKVVIAINSVDASTTLKPAELKSVLESIEKKQYRKHVSYSKQMMNSTDNKNKEDDDLSLDEQDIDDTTDINNNNKNKNQETIQDSRPLKLRKMTIEGDKEIQKELEEKESKKQEE</sequence>
<protein>
    <recommendedName>
        <fullName evidence="1">tRNA (guanine-N(7)-)-methyltransferase non-catalytic subunit wdr4</fullName>
    </recommendedName>
    <alternativeName>
        <fullName evidence="1">WD repeat-containing protein 4</fullName>
    </alternativeName>
</protein>
<accession>Q54UI3</accession>
<comment type="function">
    <text evidence="1">Required for the formation of N(7)-methylguanine at position 46 (m7G46) in tRNA. In the complex, it is required to stabilize and induce conformational changes of the catalytic subunit.</text>
</comment>
<comment type="pathway">
    <text evidence="1">tRNA modification; N(7)-methylguanine-tRNA biosynthesis.</text>
</comment>
<comment type="subunit">
    <text evidence="1">Forms a heterodimer with the catalytic subunit mettl1.</text>
</comment>
<comment type="subcellular location">
    <subcellularLocation>
        <location evidence="1">Nucleus</location>
    </subcellularLocation>
</comment>
<comment type="similarity">
    <text evidence="1">Belongs to the WD repeat TRM82 family.</text>
</comment>
<dbReference type="EMBL" id="AAFI02000040">
    <property type="protein sequence ID" value="EAL66827.1"/>
    <property type="molecule type" value="Genomic_DNA"/>
</dbReference>
<dbReference type="RefSeq" id="XP_640793.1">
    <property type="nucleotide sequence ID" value="XM_635701.1"/>
</dbReference>
<dbReference type="SMR" id="Q54UI3"/>
<dbReference type="FunCoup" id="Q54UI3">
    <property type="interactions" value="28"/>
</dbReference>
<dbReference type="STRING" id="44689.Q54UI3"/>
<dbReference type="PaxDb" id="44689-DDB0233974"/>
<dbReference type="EnsemblProtists" id="EAL66827">
    <property type="protein sequence ID" value="EAL66827"/>
    <property type="gene ID" value="DDB_G0281061"/>
</dbReference>
<dbReference type="GeneID" id="8622847"/>
<dbReference type="KEGG" id="ddi:DDB_G0281061"/>
<dbReference type="dictyBase" id="DDB_G0281061">
    <property type="gene designation" value="wdr4"/>
</dbReference>
<dbReference type="VEuPathDB" id="AmoebaDB:DDB_G0281061"/>
<dbReference type="eggNOG" id="KOG3914">
    <property type="taxonomic scope" value="Eukaryota"/>
</dbReference>
<dbReference type="HOGENOM" id="CLU_585851_0_0_1"/>
<dbReference type="InParanoid" id="Q54UI3"/>
<dbReference type="OMA" id="VSHYPNC"/>
<dbReference type="PhylomeDB" id="Q54UI3"/>
<dbReference type="UniPathway" id="UPA00989"/>
<dbReference type="PRO" id="PR:Q54UI3"/>
<dbReference type="Proteomes" id="UP000002195">
    <property type="component" value="Chromosome 3"/>
</dbReference>
<dbReference type="GO" id="GO:0005829">
    <property type="term" value="C:cytosol"/>
    <property type="evidence" value="ECO:0000318"/>
    <property type="project" value="GO_Central"/>
</dbReference>
<dbReference type="GO" id="GO:0005634">
    <property type="term" value="C:nucleus"/>
    <property type="evidence" value="ECO:0000318"/>
    <property type="project" value="GO_Central"/>
</dbReference>
<dbReference type="GO" id="GO:0043527">
    <property type="term" value="C:tRNA methyltransferase complex"/>
    <property type="evidence" value="ECO:0000318"/>
    <property type="project" value="GO_Central"/>
</dbReference>
<dbReference type="GO" id="GO:0106004">
    <property type="term" value="P:tRNA (guanine-N7)-methylation"/>
    <property type="evidence" value="ECO:0007669"/>
    <property type="project" value="UniProtKB-UniRule"/>
</dbReference>
<dbReference type="GO" id="GO:0006400">
    <property type="term" value="P:tRNA modification"/>
    <property type="evidence" value="ECO:0000318"/>
    <property type="project" value="GO_Central"/>
</dbReference>
<dbReference type="FunFam" id="2.130.10.10:FF:002884">
    <property type="entry name" value="tRNA (guanine-N(7)-)-methyltransferase non-catalytic subunit wdr4"/>
    <property type="match status" value="1"/>
</dbReference>
<dbReference type="FunFam" id="2.130.10.10:FF:002906">
    <property type="entry name" value="tRNA (guanine-N(7)-)-methyltransferase non-catalytic subunit wdr4"/>
    <property type="match status" value="1"/>
</dbReference>
<dbReference type="Gene3D" id="2.130.10.10">
    <property type="entry name" value="YVTN repeat-like/Quinoprotein amine dehydrogenase"/>
    <property type="match status" value="2"/>
</dbReference>
<dbReference type="HAMAP" id="MF_03056">
    <property type="entry name" value="TRM82"/>
    <property type="match status" value="1"/>
</dbReference>
<dbReference type="InterPro" id="IPR028884">
    <property type="entry name" value="Trm82"/>
</dbReference>
<dbReference type="InterPro" id="IPR015943">
    <property type="entry name" value="WD40/YVTN_repeat-like_dom_sf"/>
</dbReference>
<dbReference type="InterPro" id="IPR036322">
    <property type="entry name" value="WD40_repeat_dom_sf"/>
</dbReference>
<dbReference type="InterPro" id="IPR001680">
    <property type="entry name" value="WD40_rpt"/>
</dbReference>
<dbReference type="PANTHER" id="PTHR16288:SF0">
    <property type="entry name" value="TRNA (GUANINE-N(7)-)-METHYLTRANSFERASE NON-CATALYTIC SUBUNIT WDR4"/>
    <property type="match status" value="1"/>
</dbReference>
<dbReference type="PANTHER" id="PTHR16288">
    <property type="entry name" value="WD40 REPEAT PROTEIN 4"/>
    <property type="match status" value="1"/>
</dbReference>
<dbReference type="Pfam" id="PF00400">
    <property type="entry name" value="WD40"/>
    <property type="match status" value="3"/>
</dbReference>
<dbReference type="SMART" id="SM00320">
    <property type="entry name" value="WD40"/>
    <property type="match status" value="3"/>
</dbReference>
<dbReference type="SUPFAM" id="SSF50978">
    <property type="entry name" value="WD40 repeat-like"/>
    <property type="match status" value="1"/>
</dbReference>
<dbReference type="PROSITE" id="PS00678">
    <property type="entry name" value="WD_REPEATS_1"/>
    <property type="match status" value="1"/>
</dbReference>
<dbReference type="PROSITE" id="PS50082">
    <property type="entry name" value="WD_REPEATS_2"/>
    <property type="match status" value="2"/>
</dbReference>
<dbReference type="PROSITE" id="PS50294">
    <property type="entry name" value="WD_REPEATS_REGION"/>
    <property type="match status" value="1"/>
</dbReference>
<proteinExistence type="inferred from homology"/>
<gene>
    <name type="primary">wdr4</name>
    <name type="ORF">DDB_G0281061</name>
</gene>
<evidence type="ECO:0000255" key="1">
    <source>
        <dbReference type="HAMAP-Rule" id="MF_03056"/>
    </source>
</evidence>
<evidence type="ECO:0000256" key="2">
    <source>
        <dbReference type="SAM" id="MobiDB-lite"/>
    </source>
</evidence>
<name>WDR4_DICDI</name>
<feature type="chain" id="PRO_0000370538" description="tRNA (guanine-N(7)-)-methyltransferase non-catalytic subunit wdr4">
    <location>
        <begin position="1"/>
        <end position="467"/>
    </location>
</feature>
<feature type="repeat" description="WD 1">
    <location>
        <begin position="61"/>
        <end position="100"/>
    </location>
</feature>
<feature type="repeat" description="WD 2">
    <location>
        <begin position="164"/>
        <end position="203"/>
    </location>
</feature>
<feature type="repeat" description="WD 3">
    <location>
        <begin position="207"/>
        <end position="249"/>
    </location>
</feature>
<feature type="region of interest" description="Disordered" evidence="2">
    <location>
        <begin position="415"/>
        <end position="467"/>
    </location>
</feature>
<feature type="compositionally biased region" description="Low complexity" evidence="2">
    <location>
        <begin position="421"/>
        <end position="434"/>
    </location>
</feature>
<feature type="compositionally biased region" description="Basic and acidic residues" evidence="2">
    <location>
        <begin position="445"/>
        <end position="467"/>
    </location>
</feature>
<reference key="1">
    <citation type="journal article" date="2005" name="Nature">
        <title>The genome of the social amoeba Dictyostelium discoideum.</title>
        <authorList>
            <person name="Eichinger L."/>
            <person name="Pachebat J.A."/>
            <person name="Gloeckner G."/>
            <person name="Rajandream M.A."/>
            <person name="Sucgang R."/>
            <person name="Berriman M."/>
            <person name="Song J."/>
            <person name="Olsen R."/>
            <person name="Szafranski K."/>
            <person name="Xu Q."/>
            <person name="Tunggal B."/>
            <person name="Kummerfeld S."/>
            <person name="Madera M."/>
            <person name="Konfortov B.A."/>
            <person name="Rivero F."/>
            <person name="Bankier A.T."/>
            <person name="Lehmann R."/>
            <person name="Hamlin N."/>
            <person name="Davies R."/>
            <person name="Gaudet P."/>
            <person name="Fey P."/>
            <person name="Pilcher K."/>
            <person name="Chen G."/>
            <person name="Saunders D."/>
            <person name="Sodergren E.J."/>
            <person name="Davis P."/>
            <person name="Kerhornou A."/>
            <person name="Nie X."/>
            <person name="Hall N."/>
            <person name="Anjard C."/>
            <person name="Hemphill L."/>
            <person name="Bason N."/>
            <person name="Farbrother P."/>
            <person name="Desany B."/>
            <person name="Just E."/>
            <person name="Morio T."/>
            <person name="Rost R."/>
            <person name="Churcher C.M."/>
            <person name="Cooper J."/>
            <person name="Haydock S."/>
            <person name="van Driessche N."/>
            <person name="Cronin A."/>
            <person name="Goodhead I."/>
            <person name="Muzny D.M."/>
            <person name="Mourier T."/>
            <person name="Pain A."/>
            <person name="Lu M."/>
            <person name="Harper D."/>
            <person name="Lindsay R."/>
            <person name="Hauser H."/>
            <person name="James K.D."/>
            <person name="Quiles M."/>
            <person name="Madan Babu M."/>
            <person name="Saito T."/>
            <person name="Buchrieser C."/>
            <person name="Wardroper A."/>
            <person name="Felder M."/>
            <person name="Thangavelu M."/>
            <person name="Johnson D."/>
            <person name="Knights A."/>
            <person name="Loulseged H."/>
            <person name="Mungall K.L."/>
            <person name="Oliver K."/>
            <person name="Price C."/>
            <person name="Quail M.A."/>
            <person name="Urushihara H."/>
            <person name="Hernandez J."/>
            <person name="Rabbinowitsch E."/>
            <person name="Steffen D."/>
            <person name="Sanders M."/>
            <person name="Ma J."/>
            <person name="Kohara Y."/>
            <person name="Sharp S."/>
            <person name="Simmonds M.N."/>
            <person name="Spiegler S."/>
            <person name="Tivey A."/>
            <person name="Sugano S."/>
            <person name="White B."/>
            <person name="Walker D."/>
            <person name="Woodward J.R."/>
            <person name="Winckler T."/>
            <person name="Tanaka Y."/>
            <person name="Shaulsky G."/>
            <person name="Schleicher M."/>
            <person name="Weinstock G.M."/>
            <person name="Rosenthal A."/>
            <person name="Cox E.C."/>
            <person name="Chisholm R.L."/>
            <person name="Gibbs R.A."/>
            <person name="Loomis W.F."/>
            <person name="Platzer M."/>
            <person name="Kay R.R."/>
            <person name="Williams J.G."/>
            <person name="Dear P.H."/>
            <person name="Noegel A.A."/>
            <person name="Barrell B.G."/>
            <person name="Kuspa A."/>
        </authorList>
    </citation>
    <scope>NUCLEOTIDE SEQUENCE [LARGE SCALE GENOMIC DNA]</scope>
    <source>
        <strain>AX4</strain>
    </source>
</reference>